<protein>
    <recommendedName>
        <fullName>Uncharacterized protein AF_1502</fullName>
    </recommendedName>
</protein>
<keyword id="KW-0002">3D-structure</keyword>
<keyword id="KW-1185">Reference proteome</keyword>
<dbReference type="EMBL" id="AE000782">
    <property type="protein sequence ID" value="AAB89752.1"/>
    <property type="molecule type" value="Genomic_DNA"/>
</dbReference>
<dbReference type="PIR" id="E69437">
    <property type="entry name" value="E69437"/>
</dbReference>
<dbReference type="RefSeq" id="WP_010878999.1">
    <property type="nucleotide sequence ID" value="NC_000917.1"/>
</dbReference>
<dbReference type="PDB" id="5A1Q">
    <property type="method" value="X-ray"/>
    <property type="resolution" value="1.60 A"/>
    <property type="chains" value="A/B=1-68"/>
</dbReference>
<dbReference type="PDBsum" id="5A1Q"/>
<dbReference type="SMR" id="O28770"/>
<dbReference type="STRING" id="224325.AF_1502"/>
<dbReference type="PaxDb" id="224325-AF_1502"/>
<dbReference type="EnsemblBacteria" id="AAB89752">
    <property type="protein sequence ID" value="AAB89752"/>
    <property type="gene ID" value="AF_1502"/>
</dbReference>
<dbReference type="KEGG" id="afu:AF_1502"/>
<dbReference type="HOGENOM" id="CLU_2783807_0_0_2"/>
<dbReference type="Proteomes" id="UP000002199">
    <property type="component" value="Chromosome"/>
</dbReference>
<sequence>MITYKKLLDELKKEIGPIAKIFLNKAMESLGYDDVDDSNYKEILSVLKMNKELREYVEIVEERLEKEG</sequence>
<accession>O28770</accession>
<reference key="1">
    <citation type="journal article" date="1997" name="Nature">
        <title>The complete genome sequence of the hyperthermophilic, sulphate-reducing archaeon Archaeoglobus fulgidus.</title>
        <authorList>
            <person name="Klenk H.-P."/>
            <person name="Clayton R.A."/>
            <person name="Tomb J.-F."/>
            <person name="White O."/>
            <person name="Nelson K.E."/>
            <person name="Ketchum K.A."/>
            <person name="Dodson R.J."/>
            <person name="Gwinn M.L."/>
            <person name="Hickey E.K."/>
            <person name="Peterson J.D."/>
            <person name="Richardson D.L."/>
            <person name="Kerlavage A.R."/>
            <person name="Graham D.E."/>
            <person name="Kyrpides N.C."/>
            <person name="Fleischmann R.D."/>
            <person name="Quackenbush J."/>
            <person name="Lee N.H."/>
            <person name="Sutton G.G."/>
            <person name="Gill S.R."/>
            <person name="Kirkness E.F."/>
            <person name="Dougherty B.A."/>
            <person name="McKenney K."/>
            <person name="Adams M.D."/>
            <person name="Loftus B.J."/>
            <person name="Peterson S.N."/>
            <person name="Reich C.I."/>
            <person name="McNeil L.K."/>
            <person name="Badger J.H."/>
            <person name="Glodek A."/>
            <person name="Zhou L."/>
            <person name="Overbeek R."/>
            <person name="Gocayne J.D."/>
            <person name="Weidman J.F."/>
            <person name="McDonald L.A."/>
            <person name="Utterback T.R."/>
            <person name="Cotton M.D."/>
            <person name="Spriggs T."/>
            <person name="Artiach P."/>
            <person name="Kaine B.P."/>
            <person name="Sykes S.M."/>
            <person name="Sadow P.W."/>
            <person name="D'Andrea K.P."/>
            <person name="Bowman C."/>
            <person name="Fujii C."/>
            <person name="Garland S.A."/>
            <person name="Mason T.M."/>
            <person name="Olsen G.J."/>
            <person name="Fraser C.M."/>
            <person name="Smith H.O."/>
            <person name="Woese C.R."/>
            <person name="Venter J.C."/>
        </authorList>
    </citation>
    <scope>NUCLEOTIDE SEQUENCE [LARGE SCALE GENOMIC DNA]</scope>
    <source>
        <strain>ATCC 49558 / DSM 4304 / JCM 9628 / NBRC 100126 / VC-16</strain>
    </source>
</reference>
<organism>
    <name type="scientific">Archaeoglobus fulgidus (strain ATCC 49558 / DSM 4304 / JCM 9628 / NBRC 100126 / VC-16)</name>
    <dbReference type="NCBI Taxonomy" id="224325"/>
    <lineage>
        <taxon>Archaea</taxon>
        <taxon>Methanobacteriati</taxon>
        <taxon>Methanobacteriota</taxon>
        <taxon>Archaeoglobi</taxon>
        <taxon>Archaeoglobales</taxon>
        <taxon>Archaeoglobaceae</taxon>
        <taxon>Archaeoglobus</taxon>
    </lineage>
</organism>
<feature type="chain" id="PRO_0000128013" description="Uncharacterized protein AF_1502">
    <location>
        <begin position="1"/>
        <end position="68"/>
    </location>
</feature>
<feature type="helix" evidence="1">
    <location>
        <begin position="4"/>
        <end position="15"/>
    </location>
</feature>
<feature type="helix" evidence="1">
    <location>
        <begin position="19"/>
        <end position="30"/>
    </location>
</feature>
<feature type="turn" evidence="1">
    <location>
        <begin position="37"/>
        <end position="39"/>
    </location>
</feature>
<feature type="helix" evidence="1">
    <location>
        <begin position="40"/>
        <end position="48"/>
    </location>
</feature>
<feature type="turn" evidence="1">
    <location>
        <begin position="51"/>
        <end position="53"/>
    </location>
</feature>
<feature type="helix" evidence="1">
    <location>
        <begin position="54"/>
        <end position="67"/>
    </location>
</feature>
<evidence type="ECO:0007829" key="1">
    <source>
        <dbReference type="PDB" id="5A1Q"/>
    </source>
</evidence>
<proteinExistence type="evidence at protein level"/>
<gene>
    <name type="ordered locus">AF_1502</name>
</gene>
<name>Y1502_ARCFU</name>